<comment type="function">
    <text>Relaxin is an ovarian hormone that acts with estrogen to produce dilatation of the birth canal in many mammals. May be involved in remodeling of connective tissues during pregnancy, promoting growth of pubic ligaments and ripening of the cervix.</text>
</comment>
<comment type="subunit">
    <text>Heterodimer of a B chain and an A chain linked by two disulfide bonds.</text>
</comment>
<comment type="subcellular location">
    <subcellularLocation>
        <location>Secreted</location>
    </subcellularLocation>
</comment>
<comment type="similarity">
    <text evidence="2">Belongs to the insulin family.</text>
</comment>
<gene>
    <name type="primary">RLN</name>
</gene>
<protein>
    <recommendedName>
        <fullName>Prorelaxin</fullName>
    </recommendedName>
    <component>
        <recommendedName>
            <fullName>Relaxin B chain</fullName>
        </recommendedName>
    </component>
    <component>
        <recommendedName>
            <fullName>Relaxin A chain</fullName>
        </recommendedName>
    </component>
</protein>
<sequence length="185" mass="20895">MPRLFLFHLLGVCLLLNQFSRAVAAKWMDDVIKACGRELVRAQIAICGKSTLGKRSLNQEDAPLKPRPAAEIVPSLINQDTETINMMSEFVANLPQELKLTLSERQPALSELQQHVPVLKDSNLSFEEFKKIIRKRQSEATDSSPSELRSLGLDTHSRRKRQLYMTLSNKCCHIGCTKKSLAKFC</sequence>
<accession>P19884</accession>
<dbReference type="PIR" id="A34936">
    <property type="entry name" value="A34936"/>
</dbReference>
<dbReference type="SMR" id="P19884"/>
<dbReference type="FunCoup" id="P19884">
    <property type="interactions" value="519"/>
</dbReference>
<dbReference type="STRING" id="9544.ENSMMUP00000053647"/>
<dbReference type="InParanoid" id="P19884"/>
<dbReference type="Proteomes" id="UP000006718">
    <property type="component" value="Unassembled WGS sequence"/>
</dbReference>
<dbReference type="GO" id="GO:0005576">
    <property type="term" value="C:extracellular region"/>
    <property type="evidence" value="ECO:0007669"/>
    <property type="project" value="UniProtKB-SubCell"/>
</dbReference>
<dbReference type="GO" id="GO:0005179">
    <property type="term" value="F:hormone activity"/>
    <property type="evidence" value="ECO:0007669"/>
    <property type="project" value="UniProtKB-KW"/>
</dbReference>
<dbReference type="CDD" id="cd00101">
    <property type="entry name" value="IlGF_like"/>
    <property type="match status" value="1"/>
</dbReference>
<dbReference type="CDD" id="cd04365">
    <property type="entry name" value="IlGF_relaxin_like"/>
    <property type="match status" value="1"/>
</dbReference>
<dbReference type="Gene3D" id="1.10.100.10">
    <property type="entry name" value="Insulin-like"/>
    <property type="match status" value="1"/>
</dbReference>
<dbReference type="InterPro" id="IPR016179">
    <property type="entry name" value="Insulin-like"/>
</dbReference>
<dbReference type="InterPro" id="IPR036438">
    <property type="entry name" value="Insulin-like_sf"/>
</dbReference>
<dbReference type="InterPro" id="IPR022353">
    <property type="entry name" value="Insulin_CS"/>
</dbReference>
<dbReference type="InterPro" id="IPR022421">
    <property type="entry name" value="Relaxin"/>
</dbReference>
<dbReference type="InterPro" id="IPR051042">
    <property type="entry name" value="Repro_Hormone_Insulin-like"/>
</dbReference>
<dbReference type="PANTHER" id="PTHR12004:SF13">
    <property type="entry name" value="PRORELAXIN H2"/>
    <property type="match status" value="1"/>
</dbReference>
<dbReference type="PANTHER" id="PTHR12004">
    <property type="entry name" value="RELAXIN"/>
    <property type="match status" value="1"/>
</dbReference>
<dbReference type="Pfam" id="PF00049">
    <property type="entry name" value="Insulin"/>
    <property type="match status" value="1"/>
</dbReference>
<dbReference type="PRINTS" id="PR02004">
    <property type="entry name" value="RELAXIN"/>
</dbReference>
<dbReference type="SMART" id="SM00078">
    <property type="entry name" value="IlGF"/>
    <property type="match status" value="1"/>
</dbReference>
<dbReference type="SUPFAM" id="SSF56994">
    <property type="entry name" value="Insulin-like"/>
    <property type="match status" value="1"/>
</dbReference>
<dbReference type="PROSITE" id="PS00262">
    <property type="entry name" value="INSULIN"/>
    <property type="match status" value="1"/>
</dbReference>
<feature type="signal peptide" evidence="1">
    <location>
        <begin position="1"/>
        <end position="24"/>
    </location>
</feature>
<feature type="peptide" id="PRO_0000016097" description="Relaxin B chain" evidence="1">
    <location>
        <begin position="25"/>
        <end position="53"/>
    </location>
</feature>
<feature type="propeptide" id="PRO_0000016098" description="Connecting peptide" evidence="1">
    <location>
        <begin position="56"/>
        <end position="157"/>
    </location>
</feature>
<feature type="peptide" id="PRO_0000016099" description="Relaxin A chain" evidence="1">
    <location>
        <begin position="162"/>
        <end position="185"/>
    </location>
</feature>
<feature type="disulfide bond" description="Interchain (between B and A chains)" evidence="1">
    <location>
        <begin position="35"/>
        <end position="172"/>
    </location>
</feature>
<feature type="disulfide bond" description="Interchain (between B and A chains)" evidence="1">
    <location>
        <begin position="47"/>
        <end position="185"/>
    </location>
</feature>
<feature type="disulfide bond" evidence="1">
    <location>
        <begin position="171"/>
        <end position="176"/>
    </location>
</feature>
<reference key="1">
    <citation type="journal article" date="1989" name="J. Mol. Endocrinol.">
        <title>Structure of rhesus monkey relaxin predicted by analysis of the single-copy rhesus monkey relaxin gene.</title>
        <authorList>
            <person name="Crawford R.J."/>
            <person name="Hammond V.E."/>
            <person name="Roche P.J."/>
            <person name="Johnston P.D."/>
            <person name="Tregear G.W."/>
        </authorList>
    </citation>
    <scope>NUCLEOTIDE SEQUENCE</scope>
</reference>
<proteinExistence type="inferred from homology"/>
<keyword id="KW-0165">Cleavage on pair of basic residues</keyword>
<keyword id="KW-1015">Disulfide bond</keyword>
<keyword id="KW-0372">Hormone</keyword>
<keyword id="KW-1185">Reference proteome</keyword>
<keyword id="KW-0964">Secreted</keyword>
<keyword id="KW-0732">Signal</keyword>
<name>RELX_MACMU</name>
<evidence type="ECO:0000250" key="1"/>
<evidence type="ECO:0000305" key="2"/>
<organism>
    <name type="scientific">Macaca mulatta</name>
    <name type="common">Rhesus macaque</name>
    <dbReference type="NCBI Taxonomy" id="9544"/>
    <lineage>
        <taxon>Eukaryota</taxon>
        <taxon>Metazoa</taxon>
        <taxon>Chordata</taxon>
        <taxon>Craniata</taxon>
        <taxon>Vertebrata</taxon>
        <taxon>Euteleostomi</taxon>
        <taxon>Mammalia</taxon>
        <taxon>Eutheria</taxon>
        <taxon>Euarchontoglires</taxon>
        <taxon>Primates</taxon>
        <taxon>Haplorrhini</taxon>
        <taxon>Catarrhini</taxon>
        <taxon>Cercopithecidae</taxon>
        <taxon>Cercopithecinae</taxon>
        <taxon>Macaca</taxon>
    </lineage>
</organism>